<gene>
    <name type="ORF">PGUG_03164</name>
</gene>
<organism>
    <name type="scientific">Meyerozyma guilliermondii (strain ATCC 6260 / CBS 566 / DSM 6381 / JCM 1539 / NBRC 10279 / NRRL Y-324)</name>
    <name type="common">Yeast</name>
    <name type="synonym">Candida guilliermondii</name>
    <dbReference type="NCBI Taxonomy" id="294746"/>
    <lineage>
        <taxon>Eukaryota</taxon>
        <taxon>Fungi</taxon>
        <taxon>Dikarya</taxon>
        <taxon>Ascomycota</taxon>
        <taxon>Saccharomycotina</taxon>
        <taxon>Pichiomycetes</taxon>
        <taxon>Debaryomycetaceae</taxon>
        <taxon>Meyerozyma</taxon>
    </lineage>
</organism>
<comment type="function">
    <text evidence="1">Probable lipid hydrolase.</text>
</comment>
<comment type="subcellular location">
    <subcellularLocation>
        <location evidence="5">Membrane</location>
        <topology evidence="5">Single-pass membrane protein</topology>
    </subcellularLocation>
</comment>
<comment type="similarity">
    <text evidence="5">Belongs to the PLPL family.</text>
</comment>
<name>PLPL_PICGU</name>
<accession>A5DIR3</accession>
<feature type="chain" id="PRO_0000295565" description="Patatin-like phospholipase domain-containing protein PGUG_03164">
    <location>
        <begin position="1"/>
        <end position="717"/>
    </location>
</feature>
<feature type="transmembrane region" description="Helical" evidence="2">
    <location>
        <begin position="123"/>
        <end position="143"/>
    </location>
</feature>
<feature type="domain" description="PNPLA" evidence="3">
    <location>
        <begin position="298"/>
        <end position="490"/>
    </location>
</feature>
<feature type="region of interest" description="Disordered" evidence="4">
    <location>
        <begin position="680"/>
        <end position="717"/>
    </location>
</feature>
<feature type="short sequence motif" description="GXSXG" evidence="3">
    <location>
        <begin position="329"/>
        <end position="333"/>
    </location>
</feature>
<feature type="compositionally biased region" description="Acidic residues" evidence="4">
    <location>
        <begin position="704"/>
        <end position="717"/>
    </location>
</feature>
<feature type="active site" description="Nucleophile" evidence="3">
    <location>
        <position position="331"/>
    </location>
</feature>
<feature type="active site" description="Proton acceptor" evidence="3">
    <location>
        <position position="477"/>
    </location>
</feature>
<reference key="1">
    <citation type="journal article" date="2009" name="Nature">
        <title>Evolution of pathogenicity and sexual reproduction in eight Candida genomes.</title>
        <authorList>
            <person name="Butler G."/>
            <person name="Rasmussen M.D."/>
            <person name="Lin M.F."/>
            <person name="Santos M.A.S."/>
            <person name="Sakthikumar S."/>
            <person name="Munro C.A."/>
            <person name="Rheinbay E."/>
            <person name="Grabherr M."/>
            <person name="Forche A."/>
            <person name="Reedy J.L."/>
            <person name="Agrafioti I."/>
            <person name="Arnaud M.B."/>
            <person name="Bates S."/>
            <person name="Brown A.J.P."/>
            <person name="Brunke S."/>
            <person name="Costanzo M.C."/>
            <person name="Fitzpatrick D.A."/>
            <person name="de Groot P.W.J."/>
            <person name="Harris D."/>
            <person name="Hoyer L.L."/>
            <person name="Hube B."/>
            <person name="Klis F.M."/>
            <person name="Kodira C."/>
            <person name="Lennard N."/>
            <person name="Logue M.E."/>
            <person name="Martin R."/>
            <person name="Neiman A.M."/>
            <person name="Nikolaou E."/>
            <person name="Quail M.A."/>
            <person name="Quinn J."/>
            <person name="Santos M.C."/>
            <person name="Schmitzberger F.F."/>
            <person name="Sherlock G."/>
            <person name="Shah P."/>
            <person name="Silverstein K.A.T."/>
            <person name="Skrzypek M.S."/>
            <person name="Soll D."/>
            <person name="Staggs R."/>
            <person name="Stansfield I."/>
            <person name="Stumpf M.P.H."/>
            <person name="Sudbery P.E."/>
            <person name="Srikantha T."/>
            <person name="Zeng Q."/>
            <person name="Berman J."/>
            <person name="Berriman M."/>
            <person name="Heitman J."/>
            <person name="Gow N.A.R."/>
            <person name="Lorenz M.C."/>
            <person name="Birren B.W."/>
            <person name="Kellis M."/>
            <person name="Cuomo C.A."/>
        </authorList>
    </citation>
    <scope>NUCLEOTIDE SEQUENCE [LARGE SCALE GENOMIC DNA]</scope>
    <source>
        <strain>ATCC 6260 / CBS 566 / DSM 6381 / JCM 1539 / NBRC 10279 / NRRL Y-324</strain>
    </source>
</reference>
<protein>
    <recommendedName>
        <fullName>Patatin-like phospholipase domain-containing protein PGUG_03164</fullName>
        <ecNumber>3.1.1.-</ecNumber>
    </recommendedName>
</protein>
<sequence>MTSSTPLYDENEDYIDENHINTFAKALLWEDDDHDGLASPPLPAYEGDKLAEVNAEELSSVLTPEPNNESEKSRPEFVVSHNDWYPINAPEKSKAKADAKGRKKRASTRDEFRSSAAYTLLRWPFLIIITVWILLLCILYTVVRAYVALSEYMLTWVGERKVLRNKLRASKTYEEWIENALELDRYLHLDKWSSIPRFSYYDYRTVKRTTSKLRMLRMRGMDEELMVFLQGCLKKNFAGIENRQLYAHRYYGTKNVVHVYIDEVVASIDHVTESENITPEDKRRFFRSVSRNYGRTALCLSGGACFAYTHFGIVKALLDNDLLPSIITGTSGGGLVAALACTRTDDELKQLLVPRLARKITACEDPWYVWIPRWWRTGARFDSTAWARKSNYFTLGSLTFQEAYHRTGRRLNISTVPADPHSPVILCNNITAPNCIIWSCLLASSAVPGILNPVVLMMKDSKKNTIVPFSLGSKWKDGSLRTDIPIDALKTYYNVNFTVVSQVNPHISLFFFAPKGSVGRPVASSRRKTRREKYASLRGGFIATALEHLFKLEIKKWLEMIKTLDLLPRLSESDWSSIWLQRFTGSITIWPRNNFRDFWYILSDPSEEGLGEMIRKGERYMFPKILFLKHRLSIENAIERGRTKSKLSTAHLEHSPRFSGTPEFAGPEFQLQTVHYDDDYDSESSAEETLSPGFSQGTHAVLTDESDDDSSDDEIDD</sequence>
<keyword id="KW-0378">Hydrolase</keyword>
<keyword id="KW-0442">Lipid degradation</keyword>
<keyword id="KW-0443">Lipid metabolism</keyword>
<keyword id="KW-0472">Membrane</keyword>
<keyword id="KW-1185">Reference proteome</keyword>
<keyword id="KW-0812">Transmembrane</keyword>
<keyword id="KW-1133">Transmembrane helix</keyword>
<proteinExistence type="inferred from homology"/>
<evidence type="ECO:0000250" key="1"/>
<evidence type="ECO:0000255" key="2"/>
<evidence type="ECO:0000255" key="3">
    <source>
        <dbReference type="PROSITE-ProRule" id="PRU01161"/>
    </source>
</evidence>
<evidence type="ECO:0000256" key="4">
    <source>
        <dbReference type="SAM" id="MobiDB-lite"/>
    </source>
</evidence>
<evidence type="ECO:0000305" key="5"/>
<dbReference type="EC" id="3.1.1.-"/>
<dbReference type="EMBL" id="CH408157">
    <property type="protein sequence ID" value="EDK39066.2"/>
    <property type="molecule type" value="Genomic_DNA"/>
</dbReference>
<dbReference type="RefSeq" id="XP_001485435.2">
    <property type="nucleotide sequence ID" value="XM_001485385.1"/>
</dbReference>
<dbReference type="GeneID" id="5127254"/>
<dbReference type="KEGG" id="pgu:PGUG_03164"/>
<dbReference type="VEuPathDB" id="FungiDB:PGUG_03164"/>
<dbReference type="eggNOG" id="KOG2214">
    <property type="taxonomic scope" value="Eukaryota"/>
</dbReference>
<dbReference type="HOGENOM" id="CLU_009031_2_2_1"/>
<dbReference type="InParanoid" id="A5DIR3"/>
<dbReference type="OMA" id="CSWFTRG"/>
<dbReference type="OrthoDB" id="15478at2759"/>
<dbReference type="Proteomes" id="UP000001997">
    <property type="component" value="Unassembled WGS sequence"/>
</dbReference>
<dbReference type="GO" id="GO:0016020">
    <property type="term" value="C:membrane"/>
    <property type="evidence" value="ECO:0007669"/>
    <property type="project" value="UniProtKB-SubCell"/>
</dbReference>
<dbReference type="GO" id="GO:0004806">
    <property type="term" value="F:triacylglycerol lipase activity"/>
    <property type="evidence" value="ECO:0007669"/>
    <property type="project" value="InterPro"/>
</dbReference>
<dbReference type="GO" id="GO:0016042">
    <property type="term" value="P:lipid catabolic process"/>
    <property type="evidence" value="ECO:0007669"/>
    <property type="project" value="UniProtKB-KW"/>
</dbReference>
<dbReference type="GO" id="GO:0006641">
    <property type="term" value="P:triglyceride metabolic process"/>
    <property type="evidence" value="ECO:0007669"/>
    <property type="project" value="UniProtKB-ARBA"/>
</dbReference>
<dbReference type="CDD" id="cd07232">
    <property type="entry name" value="Pat_PLPL"/>
    <property type="match status" value="1"/>
</dbReference>
<dbReference type="Gene3D" id="3.40.1090.10">
    <property type="entry name" value="Cytosolic phospholipase A2 catalytic domain"/>
    <property type="match status" value="2"/>
</dbReference>
<dbReference type="InterPro" id="IPR016035">
    <property type="entry name" value="Acyl_Trfase/lysoPLipase"/>
</dbReference>
<dbReference type="InterPro" id="IPR050301">
    <property type="entry name" value="NTE"/>
</dbReference>
<dbReference type="InterPro" id="IPR002641">
    <property type="entry name" value="PNPLA_dom"/>
</dbReference>
<dbReference type="InterPro" id="IPR021771">
    <property type="entry name" value="Triacylglycerol_lipase_N"/>
</dbReference>
<dbReference type="PANTHER" id="PTHR14226">
    <property type="entry name" value="NEUROPATHY TARGET ESTERASE/SWISS CHEESE D.MELANOGASTER"/>
    <property type="match status" value="1"/>
</dbReference>
<dbReference type="PANTHER" id="PTHR14226:SF66">
    <property type="entry name" value="TRIACYLGLYCEROL LIPASE PTL2"/>
    <property type="match status" value="1"/>
</dbReference>
<dbReference type="Pfam" id="PF11815">
    <property type="entry name" value="DUF3336"/>
    <property type="match status" value="1"/>
</dbReference>
<dbReference type="Pfam" id="PF01734">
    <property type="entry name" value="Patatin"/>
    <property type="match status" value="1"/>
</dbReference>
<dbReference type="SUPFAM" id="SSF52151">
    <property type="entry name" value="FabD/lysophospholipase-like"/>
    <property type="match status" value="1"/>
</dbReference>
<dbReference type="PROSITE" id="PS51635">
    <property type="entry name" value="PNPLA"/>
    <property type="match status" value="1"/>
</dbReference>